<comment type="function">
    <text evidence="1">Part of the RFC clamp loader complex which loads the PCNA sliding clamp onto DNA.</text>
</comment>
<comment type="subunit">
    <text evidence="1">Heteromultimer composed of small subunits (RfcS) and large subunits (RfcL).</text>
</comment>
<comment type="similarity">
    <text evidence="1">Belongs to the activator 1 small subunits family. RfcS subfamily.</text>
</comment>
<keyword id="KW-0067">ATP-binding</keyword>
<keyword id="KW-0235">DNA replication</keyword>
<keyword id="KW-0547">Nucleotide-binding</keyword>
<feature type="chain" id="PRO_0000135980" description="Replication factor C small subunit">
    <location>
        <begin position="1"/>
        <end position="318"/>
    </location>
</feature>
<feature type="binding site" evidence="1">
    <location>
        <begin position="43"/>
        <end position="50"/>
    </location>
    <ligand>
        <name>ATP</name>
        <dbReference type="ChEBI" id="CHEBI:30616"/>
    </ligand>
</feature>
<accession>Q6L1I0</accession>
<evidence type="ECO:0000255" key="1">
    <source>
        <dbReference type="HAMAP-Rule" id="MF_01509"/>
    </source>
</evidence>
<name>RFCS_PICTO</name>
<organism>
    <name type="scientific">Picrophilus torridus (strain ATCC 700027 / DSM 9790 / JCM 10055 / NBRC 100828 / KAW 2/3)</name>
    <dbReference type="NCBI Taxonomy" id="1122961"/>
    <lineage>
        <taxon>Archaea</taxon>
        <taxon>Methanobacteriati</taxon>
        <taxon>Thermoplasmatota</taxon>
        <taxon>Thermoplasmata</taxon>
        <taxon>Thermoplasmatales</taxon>
        <taxon>Picrophilaceae</taxon>
        <taxon>Picrophilus</taxon>
    </lineage>
</organism>
<reference key="1">
    <citation type="journal article" date="2004" name="Proc. Natl. Acad. Sci. U.S.A.">
        <title>Genome sequence of Picrophilus torridus and its implications for life around pH 0.</title>
        <authorList>
            <person name="Fuetterer O."/>
            <person name="Angelov A."/>
            <person name="Liesegang H."/>
            <person name="Gottschalk G."/>
            <person name="Schleper C."/>
            <person name="Schepers B."/>
            <person name="Dock C."/>
            <person name="Antranikian G."/>
            <person name="Liebl W."/>
        </authorList>
    </citation>
    <scope>NUCLEOTIDE SEQUENCE [LARGE SCALE GENOMIC DNA]</scope>
    <source>
        <strain>ATCC 700027 / DSM 9790 / JCM 10055 / NBRC 100828 / KAW 2/3</strain>
    </source>
</reference>
<sequence length="318" mass="36050">MINIWTEKYRPKRLDDVIGEDENINTLKSFVKNGDLPHLIFAGPAGTGKTSTAIALTIELFGDDWKENFLELNASDERGIDIIRNNIKDFAKIRPSNKLGFKIIFLDEADQLTNEAQAALRRTMEMFYSTTRFIFSCNYSSKIIPPIQSRCVVLRFRPLDKEAMERKLREIAKNEKFDIDDDSLDAIYEISDGDMRKAINVMQAIQSTGEIKPSKIYEISGEINKNEYKNLISLSLNGAFSDAKSLLDKMLVDYGLSGIDIIRGMHSAIRNERIANRQKLEILIALAEFEFRISQGGSDNVQMDALLARISYIGSEIT</sequence>
<gene>
    <name evidence="1" type="primary">rfcS</name>
    <name type="ordered locus">PTO0587</name>
</gene>
<protein>
    <recommendedName>
        <fullName evidence="1">Replication factor C small subunit</fullName>
        <shortName evidence="1">RFC small subunit</shortName>
    </recommendedName>
    <alternativeName>
        <fullName evidence="1">Clamp loader small subunit</fullName>
    </alternativeName>
</protein>
<dbReference type="EMBL" id="AE017261">
    <property type="protein sequence ID" value="AAT43172.1"/>
    <property type="molecule type" value="Genomic_DNA"/>
</dbReference>
<dbReference type="RefSeq" id="WP_011177388.1">
    <property type="nucleotide sequence ID" value="NC_005877.1"/>
</dbReference>
<dbReference type="SMR" id="Q6L1I0"/>
<dbReference type="FunCoup" id="Q6L1I0">
    <property type="interactions" value="106"/>
</dbReference>
<dbReference type="STRING" id="263820.PTO0587"/>
<dbReference type="PaxDb" id="263820-PTO0587"/>
<dbReference type="GeneID" id="2844249"/>
<dbReference type="KEGG" id="pto:PTO0587"/>
<dbReference type="PATRIC" id="fig|263820.9.peg.617"/>
<dbReference type="eggNOG" id="arCOG00469">
    <property type="taxonomic scope" value="Archaea"/>
</dbReference>
<dbReference type="HOGENOM" id="CLU_042324_2_1_2"/>
<dbReference type="InParanoid" id="Q6L1I0"/>
<dbReference type="OrthoDB" id="7928at2157"/>
<dbReference type="Proteomes" id="UP000000438">
    <property type="component" value="Chromosome"/>
</dbReference>
<dbReference type="GO" id="GO:0005663">
    <property type="term" value="C:DNA replication factor C complex"/>
    <property type="evidence" value="ECO:0007669"/>
    <property type="project" value="InterPro"/>
</dbReference>
<dbReference type="GO" id="GO:0005524">
    <property type="term" value="F:ATP binding"/>
    <property type="evidence" value="ECO:0007669"/>
    <property type="project" value="UniProtKB-UniRule"/>
</dbReference>
<dbReference type="GO" id="GO:0016887">
    <property type="term" value="F:ATP hydrolysis activity"/>
    <property type="evidence" value="ECO:0007669"/>
    <property type="project" value="InterPro"/>
</dbReference>
<dbReference type="GO" id="GO:0003677">
    <property type="term" value="F:DNA binding"/>
    <property type="evidence" value="ECO:0007669"/>
    <property type="project" value="InterPro"/>
</dbReference>
<dbReference type="GO" id="GO:0003689">
    <property type="term" value="F:DNA clamp loader activity"/>
    <property type="evidence" value="ECO:0007669"/>
    <property type="project" value="UniProtKB-UniRule"/>
</dbReference>
<dbReference type="GO" id="GO:0006281">
    <property type="term" value="P:DNA repair"/>
    <property type="evidence" value="ECO:0007669"/>
    <property type="project" value="TreeGrafter"/>
</dbReference>
<dbReference type="GO" id="GO:0006261">
    <property type="term" value="P:DNA-templated DNA replication"/>
    <property type="evidence" value="ECO:0007669"/>
    <property type="project" value="TreeGrafter"/>
</dbReference>
<dbReference type="CDD" id="cd00009">
    <property type="entry name" value="AAA"/>
    <property type="match status" value="1"/>
</dbReference>
<dbReference type="CDD" id="cd18140">
    <property type="entry name" value="HLD_clamp_RFC"/>
    <property type="match status" value="1"/>
</dbReference>
<dbReference type="FunFam" id="3.40.50.300:FF:000952">
    <property type="entry name" value="Replication factor C subunit 2"/>
    <property type="match status" value="1"/>
</dbReference>
<dbReference type="Gene3D" id="1.10.8.60">
    <property type="match status" value="1"/>
</dbReference>
<dbReference type="Gene3D" id="1.20.272.10">
    <property type="match status" value="1"/>
</dbReference>
<dbReference type="Gene3D" id="3.40.50.300">
    <property type="entry name" value="P-loop containing nucleotide triphosphate hydrolases"/>
    <property type="match status" value="1"/>
</dbReference>
<dbReference type="HAMAP" id="MF_01509">
    <property type="entry name" value="RfcS"/>
    <property type="match status" value="1"/>
</dbReference>
<dbReference type="InterPro" id="IPR003593">
    <property type="entry name" value="AAA+_ATPase"/>
</dbReference>
<dbReference type="InterPro" id="IPR003959">
    <property type="entry name" value="ATPase_AAA_core"/>
</dbReference>
<dbReference type="InterPro" id="IPR008921">
    <property type="entry name" value="DNA_pol3_clamp-load_cplx_C"/>
</dbReference>
<dbReference type="InterPro" id="IPR050238">
    <property type="entry name" value="DNA_Rep/Repair_Clamp_Loader"/>
</dbReference>
<dbReference type="InterPro" id="IPR027417">
    <property type="entry name" value="P-loop_NTPase"/>
</dbReference>
<dbReference type="InterPro" id="IPR023748">
    <property type="entry name" value="Rep_factor-C_ssu_arc"/>
</dbReference>
<dbReference type="InterPro" id="IPR013748">
    <property type="entry name" value="Rep_factorC_C"/>
</dbReference>
<dbReference type="InterPro" id="IPR047854">
    <property type="entry name" value="RFC_lid"/>
</dbReference>
<dbReference type="NCBIfam" id="NF001679">
    <property type="entry name" value="PRK00440.1"/>
    <property type="match status" value="1"/>
</dbReference>
<dbReference type="PANTHER" id="PTHR11669">
    <property type="entry name" value="REPLICATION FACTOR C / DNA POLYMERASE III GAMMA-TAU SUBUNIT"/>
    <property type="match status" value="1"/>
</dbReference>
<dbReference type="PANTHER" id="PTHR11669:SF20">
    <property type="entry name" value="REPLICATION FACTOR C SUBUNIT 4"/>
    <property type="match status" value="1"/>
</dbReference>
<dbReference type="Pfam" id="PF00004">
    <property type="entry name" value="AAA"/>
    <property type="match status" value="1"/>
</dbReference>
<dbReference type="Pfam" id="PF21960">
    <property type="entry name" value="RCF1-5-like_lid"/>
    <property type="match status" value="1"/>
</dbReference>
<dbReference type="Pfam" id="PF08542">
    <property type="entry name" value="Rep_fac_C"/>
    <property type="match status" value="1"/>
</dbReference>
<dbReference type="SMART" id="SM00382">
    <property type="entry name" value="AAA"/>
    <property type="match status" value="1"/>
</dbReference>
<dbReference type="SUPFAM" id="SSF52540">
    <property type="entry name" value="P-loop containing nucleoside triphosphate hydrolases"/>
    <property type="match status" value="1"/>
</dbReference>
<dbReference type="SUPFAM" id="SSF48019">
    <property type="entry name" value="post-AAA+ oligomerization domain-like"/>
    <property type="match status" value="1"/>
</dbReference>
<proteinExistence type="inferred from homology"/>